<organism>
    <name type="scientific">Streptococcus pneumoniae serotype 2 (strain D39 / NCTC 7466)</name>
    <dbReference type="NCBI Taxonomy" id="373153"/>
    <lineage>
        <taxon>Bacteria</taxon>
        <taxon>Bacillati</taxon>
        <taxon>Bacillota</taxon>
        <taxon>Bacilli</taxon>
        <taxon>Lactobacillales</taxon>
        <taxon>Streptococcaceae</taxon>
        <taxon>Streptococcus</taxon>
    </lineage>
</organism>
<evidence type="ECO:0000255" key="1">
    <source>
        <dbReference type="HAMAP-Rule" id="MF_00636"/>
    </source>
</evidence>
<accession>Q04JI2</accession>
<gene>
    <name type="ordered locus">SPD_1396</name>
</gene>
<sequence length="296" mass="33765">MTKKQLHLVIVTGMGGAGKTVAIQSFEDLGYFTIDNMPPALLPKFLQLVEIKEDNPKLALVVDMRSRSFFSEIQAVLDELENQDGLDFKILFLDAADKELVARYKETRRSHPLAADGRILDGIKLERELLAPLKNMSQNVVDTTELTPRELRKTLAEQFSDQEQAQSFRIEVMSFGFKYGIPIDADLVFDVRFLPNPYYLPELRNQTGVDEPVYDYVMNHPESEDFYQHLLALIEPILPSYQKEGKSVLTIAMGCTGGQHRSVAFAKRLVQDLSKNWSVNEGHRDKDRRKETVNRS</sequence>
<comment type="function">
    <text evidence="1">Displays ATPase and GTPase activities.</text>
</comment>
<comment type="similarity">
    <text evidence="1">Belongs to the RapZ-like family.</text>
</comment>
<reference key="1">
    <citation type="journal article" date="2007" name="J. Bacteriol.">
        <title>Genome sequence of Avery's virulent serotype 2 strain D39 of Streptococcus pneumoniae and comparison with that of unencapsulated laboratory strain R6.</title>
        <authorList>
            <person name="Lanie J.A."/>
            <person name="Ng W.-L."/>
            <person name="Kazmierczak K.M."/>
            <person name="Andrzejewski T.M."/>
            <person name="Davidsen T.M."/>
            <person name="Wayne K.J."/>
            <person name="Tettelin H."/>
            <person name="Glass J.I."/>
            <person name="Winkler M.E."/>
        </authorList>
    </citation>
    <scope>NUCLEOTIDE SEQUENCE [LARGE SCALE GENOMIC DNA]</scope>
    <source>
        <strain>D39 / NCTC 7466</strain>
    </source>
</reference>
<feature type="chain" id="PRO_1000056864" description="Nucleotide-binding protein SPD_1396">
    <location>
        <begin position="1"/>
        <end position="296"/>
    </location>
</feature>
<feature type="binding site" evidence="1">
    <location>
        <begin position="13"/>
        <end position="20"/>
    </location>
    <ligand>
        <name>ATP</name>
        <dbReference type="ChEBI" id="CHEBI:30616"/>
    </ligand>
</feature>
<feature type="binding site" evidence="1">
    <location>
        <begin position="63"/>
        <end position="66"/>
    </location>
    <ligand>
        <name>GTP</name>
        <dbReference type="ChEBI" id="CHEBI:37565"/>
    </ligand>
</feature>
<dbReference type="EMBL" id="CP000410">
    <property type="protein sequence ID" value="ABJ53642.1"/>
    <property type="molecule type" value="Genomic_DNA"/>
</dbReference>
<dbReference type="SMR" id="Q04JI2"/>
<dbReference type="PaxDb" id="373153-SPD_1396"/>
<dbReference type="KEGG" id="spd:SPD_1396"/>
<dbReference type="eggNOG" id="COG1660">
    <property type="taxonomic scope" value="Bacteria"/>
</dbReference>
<dbReference type="HOGENOM" id="CLU_059558_0_0_9"/>
<dbReference type="BioCyc" id="SPNE373153:G1G6V-1502-MONOMER"/>
<dbReference type="Proteomes" id="UP000001452">
    <property type="component" value="Chromosome"/>
</dbReference>
<dbReference type="GO" id="GO:0005524">
    <property type="term" value="F:ATP binding"/>
    <property type="evidence" value="ECO:0007669"/>
    <property type="project" value="UniProtKB-UniRule"/>
</dbReference>
<dbReference type="GO" id="GO:0005525">
    <property type="term" value="F:GTP binding"/>
    <property type="evidence" value="ECO:0007669"/>
    <property type="project" value="UniProtKB-UniRule"/>
</dbReference>
<dbReference type="Gene3D" id="3.40.50.300">
    <property type="entry name" value="P-loop containing nucleotide triphosphate hydrolases"/>
    <property type="match status" value="1"/>
</dbReference>
<dbReference type="HAMAP" id="MF_00636">
    <property type="entry name" value="RapZ_like"/>
    <property type="match status" value="1"/>
</dbReference>
<dbReference type="InterPro" id="IPR027417">
    <property type="entry name" value="P-loop_NTPase"/>
</dbReference>
<dbReference type="InterPro" id="IPR005337">
    <property type="entry name" value="RapZ-like"/>
</dbReference>
<dbReference type="InterPro" id="IPR053930">
    <property type="entry name" value="RapZ-like_N"/>
</dbReference>
<dbReference type="InterPro" id="IPR053931">
    <property type="entry name" value="RapZ_C"/>
</dbReference>
<dbReference type="NCBIfam" id="NF003828">
    <property type="entry name" value="PRK05416.1"/>
    <property type="match status" value="1"/>
</dbReference>
<dbReference type="PANTHER" id="PTHR30448">
    <property type="entry name" value="RNASE ADAPTER PROTEIN RAPZ"/>
    <property type="match status" value="1"/>
</dbReference>
<dbReference type="PANTHER" id="PTHR30448:SF0">
    <property type="entry name" value="RNASE ADAPTER PROTEIN RAPZ"/>
    <property type="match status" value="1"/>
</dbReference>
<dbReference type="Pfam" id="PF22740">
    <property type="entry name" value="PapZ_C"/>
    <property type="match status" value="1"/>
</dbReference>
<dbReference type="Pfam" id="PF03668">
    <property type="entry name" value="RapZ-like_N"/>
    <property type="match status" value="1"/>
</dbReference>
<dbReference type="PIRSF" id="PIRSF005052">
    <property type="entry name" value="P-loopkin"/>
    <property type="match status" value="1"/>
</dbReference>
<dbReference type="SUPFAM" id="SSF52540">
    <property type="entry name" value="P-loop containing nucleoside triphosphate hydrolases"/>
    <property type="match status" value="1"/>
</dbReference>
<keyword id="KW-0067">ATP-binding</keyword>
<keyword id="KW-0342">GTP-binding</keyword>
<keyword id="KW-0547">Nucleotide-binding</keyword>
<keyword id="KW-1185">Reference proteome</keyword>
<protein>
    <recommendedName>
        <fullName evidence="1">Nucleotide-binding protein SPD_1396</fullName>
    </recommendedName>
</protein>
<proteinExistence type="inferred from homology"/>
<name>Y1396_STRP2</name>